<organism>
    <name type="scientific">Ginkgo biloba</name>
    <name type="common">Ginkgo</name>
    <name type="synonym">Maidenhair tree</name>
    <dbReference type="NCBI Taxonomy" id="3311"/>
    <lineage>
        <taxon>Eukaryota</taxon>
        <taxon>Viridiplantae</taxon>
        <taxon>Streptophyta</taxon>
        <taxon>Embryophyta</taxon>
        <taxon>Tracheophyta</taxon>
        <taxon>Spermatophyta</taxon>
        <taxon>Ginkgoidae</taxon>
        <taxon>Ginkgoales</taxon>
        <taxon>Ginkgoaceae</taxon>
        <taxon>Ginkgo</taxon>
    </lineage>
</organism>
<evidence type="ECO:0000255" key="1">
    <source>
        <dbReference type="HAMAP-Rule" id="MF_01317"/>
    </source>
</evidence>
<name>PSBL_GINBI</name>
<reference key="1">
    <citation type="journal article" date="1999" name="Gene">
        <title>RNA editing in an untranslated region of the Ginkgo chloroplast genome.</title>
        <authorList>
            <person name="Kudla J."/>
            <person name="Bock R."/>
        </authorList>
    </citation>
    <scope>NUCLEOTIDE SEQUENCE [GENOMIC DNA]</scope>
</reference>
<reference key="2">
    <citation type="journal article" date="2000" name="Am. J. Bot.">
        <title>Utility of 17 chloroplast genes for inferring the phylogeny of the basal angiosperms.</title>
        <authorList>
            <person name="Graham S.W."/>
            <person name="Olmstead R.G."/>
        </authorList>
    </citation>
    <scope>NUCLEOTIDE SEQUENCE [GENOMIC DNA]</scope>
</reference>
<geneLocation type="chloroplast"/>
<gene>
    <name evidence="1" type="primary">psbL</name>
</gene>
<accession>Q9THZ2</accession>
<feature type="chain" id="PRO_0000219714" description="Photosystem II reaction center protein L">
    <location>
        <begin position="1"/>
        <end position="38"/>
    </location>
</feature>
<feature type="transmembrane region" description="Helical" evidence="1">
    <location>
        <begin position="17"/>
        <end position="37"/>
    </location>
</feature>
<proteinExistence type="inferred from homology"/>
<comment type="function">
    <text evidence="1">One of the components of the core complex of photosystem II (PSII). PSII is a light-driven water:plastoquinone oxidoreductase that uses light energy to abstract electrons from H(2)O, generating O(2) and a proton gradient subsequently used for ATP formation. It consists of a core antenna complex that captures photons, and an electron transfer chain that converts photonic excitation into a charge separation. This subunit is found at the monomer-monomer interface and is required for correct PSII assembly and/or dimerization.</text>
</comment>
<comment type="subunit">
    <text evidence="1">PSII is composed of 1 copy each of membrane proteins PsbA, PsbB, PsbC, PsbD, PsbE, PsbF, PsbH, PsbI, PsbJ, PsbK, PsbL, PsbM, PsbT, PsbX, PsbY, PsbZ, Psb30/Ycf12, at least 3 peripheral proteins of the oxygen-evolving complex and a large number of cofactors. It forms dimeric complexes.</text>
</comment>
<comment type="subcellular location">
    <subcellularLocation>
        <location evidence="1">Plastid</location>
        <location evidence="1">Chloroplast thylakoid membrane</location>
        <topology evidence="1">Single-pass membrane protein</topology>
    </subcellularLocation>
</comment>
<comment type="similarity">
    <text evidence="1">Belongs to the PsbL family.</text>
</comment>
<dbReference type="EMBL" id="AJ130891">
    <property type="protein sequence ID" value="CAB61493.1"/>
    <property type="molecule type" value="Genomic_DNA"/>
</dbReference>
<dbReference type="EMBL" id="AF123836">
    <property type="protein sequence ID" value="AAG26224.1"/>
    <property type="molecule type" value="Genomic_DNA"/>
</dbReference>
<dbReference type="RefSeq" id="YP_005352722.1">
    <property type="nucleotide sequence ID" value="NC_016986.1"/>
</dbReference>
<dbReference type="SMR" id="Q9THZ2"/>
<dbReference type="GeneID" id="11935020"/>
<dbReference type="GO" id="GO:0009535">
    <property type="term" value="C:chloroplast thylakoid membrane"/>
    <property type="evidence" value="ECO:0007669"/>
    <property type="project" value="UniProtKB-SubCell"/>
</dbReference>
<dbReference type="GO" id="GO:0009539">
    <property type="term" value="C:photosystem II reaction center"/>
    <property type="evidence" value="ECO:0007669"/>
    <property type="project" value="InterPro"/>
</dbReference>
<dbReference type="GO" id="GO:0015979">
    <property type="term" value="P:photosynthesis"/>
    <property type="evidence" value="ECO:0007669"/>
    <property type="project" value="UniProtKB-UniRule"/>
</dbReference>
<dbReference type="HAMAP" id="MF_01317">
    <property type="entry name" value="PSII_PsbL"/>
    <property type="match status" value="1"/>
</dbReference>
<dbReference type="InterPro" id="IPR003372">
    <property type="entry name" value="PSII_PsbL"/>
</dbReference>
<dbReference type="InterPro" id="IPR037266">
    <property type="entry name" value="PSII_PsbL_sf"/>
</dbReference>
<dbReference type="Pfam" id="PF02419">
    <property type="entry name" value="PsbL"/>
    <property type="match status" value="1"/>
</dbReference>
<dbReference type="SUPFAM" id="SSF161017">
    <property type="entry name" value="Photosystem II reaction center protein L, PsbL"/>
    <property type="match status" value="1"/>
</dbReference>
<keyword id="KW-0150">Chloroplast</keyword>
<keyword id="KW-0472">Membrane</keyword>
<keyword id="KW-0602">Photosynthesis</keyword>
<keyword id="KW-0604">Photosystem II</keyword>
<keyword id="KW-0934">Plastid</keyword>
<keyword id="KW-0674">Reaction center</keyword>
<keyword id="KW-0793">Thylakoid</keyword>
<keyword id="KW-0812">Transmembrane</keyword>
<keyword id="KW-1133">Transmembrane helix</keyword>
<protein>
    <recommendedName>
        <fullName evidence="1">Photosystem II reaction center protein L</fullName>
        <shortName evidence="1">PSII-L</shortName>
    </recommendedName>
</protein>
<sequence length="38" mass="4437">MTQSNPNEQNVELNRTSLYWGLLLIFVLAVLFSNYSFN</sequence>